<dbReference type="EC" id="1.3.-.-" evidence="1"/>
<dbReference type="EMBL" id="CP000102">
    <property type="protein sequence ID" value="ABC57262.1"/>
    <property type="molecule type" value="Genomic_DNA"/>
</dbReference>
<dbReference type="RefSeq" id="WP_011406461.1">
    <property type="nucleotide sequence ID" value="NC_007681.1"/>
</dbReference>
<dbReference type="SMR" id="Q2NFZ1"/>
<dbReference type="STRING" id="339860.Msp_0874"/>
<dbReference type="KEGG" id="mst:Msp_0874"/>
<dbReference type="eggNOG" id="arCOG00570">
    <property type="taxonomic scope" value="Archaea"/>
</dbReference>
<dbReference type="HOGENOM" id="CLU_024648_0_0_2"/>
<dbReference type="OrthoDB" id="6062at2157"/>
<dbReference type="UniPathway" id="UPA00940"/>
<dbReference type="Proteomes" id="UP000001931">
    <property type="component" value="Chromosome"/>
</dbReference>
<dbReference type="GO" id="GO:0016020">
    <property type="term" value="C:membrane"/>
    <property type="evidence" value="ECO:0007669"/>
    <property type="project" value="GOC"/>
</dbReference>
<dbReference type="GO" id="GO:0050660">
    <property type="term" value="F:flavin adenine dinucleotide binding"/>
    <property type="evidence" value="ECO:0007669"/>
    <property type="project" value="UniProtKB-UniRule"/>
</dbReference>
<dbReference type="GO" id="GO:0045550">
    <property type="term" value="F:geranylgeranyl reductase activity"/>
    <property type="evidence" value="ECO:0007669"/>
    <property type="project" value="InterPro"/>
</dbReference>
<dbReference type="GO" id="GO:0016628">
    <property type="term" value="F:oxidoreductase activity, acting on the CH-CH group of donors, NAD or NADP as acceptor"/>
    <property type="evidence" value="ECO:0007669"/>
    <property type="project" value="InterPro"/>
</dbReference>
<dbReference type="GO" id="GO:0046474">
    <property type="term" value="P:glycerophospholipid biosynthetic process"/>
    <property type="evidence" value="ECO:0007669"/>
    <property type="project" value="UniProtKB-UniRule"/>
</dbReference>
<dbReference type="GO" id="GO:0046467">
    <property type="term" value="P:membrane lipid biosynthetic process"/>
    <property type="evidence" value="ECO:0007669"/>
    <property type="project" value="InterPro"/>
</dbReference>
<dbReference type="Gene3D" id="3.30.9.10">
    <property type="entry name" value="D-Amino Acid Oxidase, subunit A, domain 2"/>
    <property type="match status" value="1"/>
</dbReference>
<dbReference type="Gene3D" id="3.50.50.60">
    <property type="entry name" value="FAD/NAD(P)-binding domain"/>
    <property type="match status" value="1"/>
</dbReference>
<dbReference type="HAMAP" id="MF_01287">
    <property type="entry name" value="DGGGPL_reductase"/>
    <property type="match status" value="1"/>
</dbReference>
<dbReference type="InterPro" id="IPR023590">
    <property type="entry name" value="DGGGPL_reductase"/>
</dbReference>
<dbReference type="InterPro" id="IPR036188">
    <property type="entry name" value="FAD/NAD-bd_sf"/>
</dbReference>
<dbReference type="InterPro" id="IPR011777">
    <property type="entry name" value="Geranylgeranyl_Rdtase_fam"/>
</dbReference>
<dbReference type="InterPro" id="IPR050407">
    <property type="entry name" value="Geranylgeranyl_reductase"/>
</dbReference>
<dbReference type="InterPro" id="IPR054715">
    <property type="entry name" value="GGR_cat"/>
</dbReference>
<dbReference type="NCBIfam" id="TIGR02032">
    <property type="entry name" value="GG-red-SF"/>
    <property type="match status" value="1"/>
</dbReference>
<dbReference type="PANTHER" id="PTHR42685:SF18">
    <property type="entry name" value="DIGERANYLGERANYLGLYCEROPHOSPHOLIPID REDUCTASE"/>
    <property type="match status" value="1"/>
</dbReference>
<dbReference type="PANTHER" id="PTHR42685">
    <property type="entry name" value="GERANYLGERANYL DIPHOSPHATE REDUCTASE"/>
    <property type="match status" value="1"/>
</dbReference>
<dbReference type="Pfam" id="PF12831">
    <property type="entry name" value="FAD_oxidored"/>
    <property type="match status" value="1"/>
</dbReference>
<dbReference type="Pfam" id="PF22578">
    <property type="entry name" value="GGR_cat"/>
    <property type="match status" value="1"/>
</dbReference>
<dbReference type="PRINTS" id="PR00420">
    <property type="entry name" value="RNGMNOXGNASE"/>
</dbReference>
<dbReference type="SUPFAM" id="SSF51905">
    <property type="entry name" value="FAD/NAD(P)-binding domain"/>
    <property type="match status" value="1"/>
</dbReference>
<accession>Q2NFZ1</accession>
<proteinExistence type="inferred from homology"/>
<evidence type="ECO:0000255" key="1">
    <source>
        <dbReference type="HAMAP-Rule" id="MF_01287"/>
    </source>
</evidence>
<comment type="function">
    <text evidence="1">Is involved in the reduction of 2,3-digeranylgeranylglycerophospholipids (unsaturated archaeols) into 2,3-diphytanylglycerophospholipids (saturated archaeols) in the biosynthesis of archaeal membrane lipids. Catalyzes the formation of archaetidic acid (2,3-di-O-phytanyl-sn-glyceryl phosphate) from 2,3-di-O-geranylgeranylglyceryl phosphate (DGGGP) via the hydrogenation of each double bond of the isoprenoid chains. Is also probably able to reduce double bonds of geranyl groups in CDP-2,3-bis-O-(geranylgeranyl)-sn-glycerol and archaetidylserine, thus acting at various stages in the biosynthesis of archaeal membrane lipids.</text>
</comment>
<comment type="catalytic activity">
    <reaction evidence="1">
        <text>a 2,3-bis-O-phytanyl-sn-glycerol 1-phospholipid + 8 A = a 2,3-bis-O-(geranylgeranyl)-sn-glycerol 1-phospholipid + 8 AH2</text>
        <dbReference type="Rhea" id="RHEA:64376"/>
        <dbReference type="ChEBI" id="CHEBI:13193"/>
        <dbReference type="ChEBI" id="CHEBI:17499"/>
        <dbReference type="ChEBI" id="CHEBI:138139"/>
        <dbReference type="ChEBI" id="CHEBI:138140"/>
    </reaction>
    <physiologicalReaction direction="right-to-left" evidence="1">
        <dbReference type="Rhea" id="RHEA:64378"/>
    </physiologicalReaction>
</comment>
<comment type="catalytic activity">
    <reaction evidence="1">
        <text>2,3-bis-O-(phytanyl)-sn-glycerol 1-phosphate + 8 A = 2,3-bis-O-(geranylgeranyl)-sn-glycerol 1-phosphate + 8 AH2</text>
        <dbReference type="Rhea" id="RHEA:64368"/>
        <dbReference type="ChEBI" id="CHEBI:13193"/>
        <dbReference type="ChEBI" id="CHEBI:17499"/>
        <dbReference type="ChEBI" id="CHEBI:58837"/>
        <dbReference type="ChEBI" id="CHEBI:73125"/>
    </reaction>
    <physiologicalReaction direction="right-to-left" evidence="1">
        <dbReference type="Rhea" id="RHEA:64370"/>
    </physiologicalReaction>
</comment>
<comment type="catalytic activity">
    <reaction evidence="1">
        <text>CDP-2,3-bis-O-(geranylgeranyl)-sn-glycerol + 8 AH2 = CDP-2,3-bis-O-(phytanyl)-sn-glycerol + 8 A</text>
        <dbReference type="Rhea" id="RHEA:84207"/>
        <dbReference type="ChEBI" id="CHEBI:13193"/>
        <dbReference type="ChEBI" id="CHEBI:17499"/>
        <dbReference type="ChEBI" id="CHEBI:58838"/>
        <dbReference type="ChEBI" id="CHEBI:74004"/>
    </reaction>
    <physiologicalReaction direction="left-to-right" evidence="1">
        <dbReference type="Rhea" id="RHEA:84208"/>
    </physiologicalReaction>
</comment>
<comment type="catalytic activity">
    <reaction evidence="1">
        <text>archaetidylserine + 8 AH2 = 2,3-bis-O-phytanyl-sn-glycero-3-phospho-L-serine + 8 A</text>
        <dbReference type="Rhea" id="RHEA:84215"/>
        <dbReference type="ChEBI" id="CHEBI:13193"/>
        <dbReference type="ChEBI" id="CHEBI:17499"/>
        <dbReference type="ChEBI" id="CHEBI:71517"/>
        <dbReference type="ChEBI" id="CHEBI:74853"/>
    </reaction>
    <physiologicalReaction direction="left-to-right" evidence="1">
        <dbReference type="Rhea" id="RHEA:84216"/>
    </physiologicalReaction>
</comment>
<comment type="cofactor">
    <cofactor evidence="1">
        <name>FAD</name>
        <dbReference type="ChEBI" id="CHEBI:57692"/>
    </cofactor>
    <text evidence="1">Binds 1 FAD per subunit.</text>
</comment>
<comment type="pathway">
    <text evidence="1">Membrane lipid metabolism; glycerophospholipid metabolism.</text>
</comment>
<comment type="miscellaneous">
    <text evidence="1">Reduction reaction proceeds via syn addition of hydrogen for double bonds.</text>
</comment>
<comment type="similarity">
    <text evidence="1">Belongs to the geranylgeranyl reductase family. DGGGPL reductase subfamily.</text>
</comment>
<keyword id="KW-0274">FAD</keyword>
<keyword id="KW-0285">Flavoprotein</keyword>
<keyword id="KW-0444">Lipid biosynthesis</keyword>
<keyword id="KW-0443">Lipid metabolism</keyword>
<keyword id="KW-0560">Oxidoreductase</keyword>
<keyword id="KW-0594">Phospholipid biosynthesis</keyword>
<keyword id="KW-1208">Phospholipid metabolism</keyword>
<keyword id="KW-1185">Reference proteome</keyword>
<protein>
    <recommendedName>
        <fullName evidence="1">Digeranylgeranylglycerophospholipid reductase 1</fullName>
        <shortName evidence="1">DGGGPL reductase 1</shortName>
        <ecNumber evidence="1">1.3.-.-</ecNumber>
    </recommendedName>
    <alternativeName>
        <fullName evidence="1">2,3-bis-O-geranylgeranylglyceryl phosphate reductase 1</fullName>
    </alternativeName>
    <alternativeName>
        <fullName evidence="1">Geranylgeranyl reductase 1</fullName>
        <shortName evidence="1">GGR 1</shortName>
    </alternativeName>
</protein>
<name>GGR1_METST</name>
<sequence>MLKTDVVVIGAGPAGSMAAKHAALGGANVVLIDKKSEIGTPKRCAEGVYDEGFKWLNIEPDERWIAQRIYGATLHSPDGNSFTVTSEDVPVQGFILERKVFDKHMAMDAARAGAKIMIKTLVTDIKRNENGFILSCDSIEGTIEVEAKIAICADGPESIMAKKLGINSTTPQNMMSCAQFEMCNVDYNDDEKIEFYLGQDVALKGYAWIFPKGNGVANVGLGVTGNTDKTAYEYIMDFIEKCPATKNAQPIEMNIGGDPINGLIEKIYDDNLLICGDAAGQVNPIEGGGIIEGMLGGMAAGDVAAKAIKEENYSKERLHEYYEKYSELSFNLIETLPAARDIVYSFTDDEYNKIISVANTIDLKNISKRDVLKVVFKLPPTLTTKLIKLLKIVFPKQMKSILF</sequence>
<feature type="chain" id="PRO_0000351467" description="Digeranylgeranylglycerophospholipid reductase 1">
    <location>
        <begin position="1"/>
        <end position="403"/>
    </location>
</feature>
<feature type="binding site" evidence="1">
    <location>
        <position position="14"/>
    </location>
    <ligand>
        <name>FAD</name>
        <dbReference type="ChEBI" id="CHEBI:57692"/>
    </ligand>
</feature>
<feature type="binding site" evidence="1">
    <location>
        <position position="33"/>
    </location>
    <ligand>
        <name>FAD</name>
        <dbReference type="ChEBI" id="CHEBI:57692"/>
    </ligand>
</feature>
<feature type="binding site" evidence="1">
    <location>
        <position position="44"/>
    </location>
    <ligand>
        <name>FAD</name>
        <dbReference type="ChEBI" id="CHEBI:57692"/>
    </ligand>
</feature>
<feature type="binding site" evidence="1">
    <location>
        <position position="45"/>
    </location>
    <ligand>
        <name>FAD</name>
        <dbReference type="ChEBI" id="CHEBI:57692"/>
    </ligand>
</feature>
<feature type="binding site" evidence="1">
    <location>
        <position position="47"/>
    </location>
    <ligand>
        <name>FAD</name>
        <dbReference type="ChEBI" id="CHEBI:57692"/>
    </ligand>
</feature>
<feature type="binding site" evidence="1">
    <location>
        <position position="98"/>
    </location>
    <ligand>
        <name>FAD</name>
        <dbReference type="ChEBI" id="CHEBI:57692"/>
    </ligand>
</feature>
<feature type="binding site" evidence="1">
    <location>
        <position position="122"/>
    </location>
    <ligand>
        <name>FAD</name>
        <dbReference type="ChEBI" id="CHEBI:57692"/>
    </ligand>
</feature>
<feature type="binding site" evidence="1">
    <location>
        <position position="277"/>
    </location>
    <ligand>
        <name>FAD</name>
        <dbReference type="ChEBI" id="CHEBI:57692"/>
    </ligand>
</feature>
<feature type="binding site" evidence="1">
    <location>
        <position position="289"/>
    </location>
    <ligand>
        <name>FAD</name>
        <dbReference type="ChEBI" id="CHEBI:57692"/>
    </ligand>
</feature>
<feature type="binding site" evidence="1">
    <location>
        <position position="290"/>
    </location>
    <ligand>
        <name>FAD</name>
        <dbReference type="ChEBI" id="CHEBI:57692"/>
    </ligand>
</feature>
<reference key="1">
    <citation type="journal article" date="2006" name="J. Bacteriol.">
        <title>The genome sequence of Methanosphaera stadtmanae reveals why this human intestinal archaeon is restricted to methanol and H2 for methane formation and ATP synthesis.</title>
        <authorList>
            <person name="Fricke W.F."/>
            <person name="Seedorf H."/>
            <person name="Henne A."/>
            <person name="Kruer M."/>
            <person name="Liesegang H."/>
            <person name="Hedderich R."/>
            <person name="Gottschalk G."/>
            <person name="Thauer R.K."/>
        </authorList>
    </citation>
    <scope>NUCLEOTIDE SEQUENCE [LARGE SCALE GENOMIC DNA]</scope>
    <source>
        <strain>ATCC 43021 / DSM 3091 / JCM 11832 / MCB-3</strain>
    </source>
</reference>
<organism>
    <name type="scientific">Methanosphaera stadtmanae (strain ATCC 43021 / DSM 3091 / JCM 11832 / MCB-3)</name>
    <dbReference type="NCBI Taxonomy" id="339860"/>
    <lineage>
        <taxon>Archaea</taxon>
        <taxon>Methanobacteriati</taxon>
        <taxon>Methanobacteriota</taxon>
        <taxon>Methanomada group</taxon>
        <taxon>Methanobacteria</taxon>
        <taxon>Methanobacteriales</taxon>
        <taxon>Methanobacteriaceae</taxon>
        <taxon>Methanosphaera</taxon>
    </lineage>
</organism>
<gene>
    <name type="ordered locus">Msp_0874</name>
</gene>